<keyword id="KW-0175">Coiled coil</keyword>
<keyword id="KW-0436">Ligase</keyword>
<protein>
    <recommendedName>
        <fullName evidence="1">Putative cysteine ligase BshC</fullName>
        <ecNumber evidence="1">6.-.-.-</ecNumber>
    </recommendedName>
</protein>
<gene>
    <name evidence="1" type="primary">bshC</name>
    <name type="ordered locus">BAMEG_0569</name>
</gene>
<dbReference type="EC" id="6.-.-.-" evidence="1"/>
<dbReference type="EMBL" id="CP001215">
    <property type="protein sequence ID" value="ACP14896.1"/>
    <property type="molecule type" value="Genomic_DNA"/>
</dbReference>
<dbReference type="RefSeq" id="WP_000403057.1">
    <property type="nucleotide sequence ID" value="NC_012581.1"/>
</dbReference>
<dbReference type="SMR" id="C3L6F2"/>
<dbReference type="GeneID" id="45023748"/>
<dbReference type="KEGG" id="bah:BAMEG_0569"/>
<dbReference type="HOGENOM" id="CLU_022249_1_0_9"/>
<dbReference type="GO" id="GO:0016874">
    <property type="term" value="F:ligase activity"/>
    <property type="evidence" value="ECO:0007669"/>
    <property type="project" value="UniProtKB-UniRule"/>
</dbReference>
<dbReference type="HAMAP" id="MF_01867">
    <property type="entry name" value="BshC"/>
    <property type="match status" value="1"/>
</dbReference>
<dbReference type="InterPro" id="IPR011199">
    <property type="entry name" value="Bacillithiol_biosynth_BshC"/>
</dbReference>
<dbReference type="InterPro" id="IPR055399">
    <property type="entry name" value="CC_BshC"/>
</dbReference>
<dbReference type="InterPro" id="IPR055398">
    <property type="entry name" value="Rossmann-like_BshC"/>
</dbReference>
<dbReference type="NCBIfam" id="TIGR03998">
    <property type="entry name" value="thiol_BshC"/>
    <property type="match status" value="1"/>
</dbReference>
<dbReference type="Pfam" id="PF24850">
    <property type="entry name" value="CC_BshC"/>
    <property type="match status" value="1"/>
</dbReference>
<dbReference type="Pfam" id="PF10079">
    <property type="entry name" value="Rossmann-like_BshC"/>
    <property type="match status" value="1"/>
</dbReference>
<dbReference type="PIRSF" id="PIRSF012535">
    <property type="entry name" value="UCP012535"/>
    <property type="match status" value="1"/>
</dbReference>
<accession>C3L6F2</accession>
<organism>
    <name type="scientific">Bacillus anthracis (strain CDC 684 / NRRL 3495)</name>
    <dbReference type="NCBI Taxonomy" id="568206"/>
    <lineage>
        <taxon>Bacteria</taxon>
        <taxon>Bacillati</taxon>
        <taxon>Bacillota</taxon>
        <taxon>Bacilli</taxon>
        <taxon>Bacillales</taxon>
        <taxon>Bacillaceae</taxon>
        <taxon>Bacillus</taxon>
        <taxon>Bacillus cereus group</taxon>
    </lineage>
</organism>
<name>BSHC_BACAC</name>
<evidence type="ECO:0000255" key="1">
    <source>
        <dbReference type="HAMAP-Rule" id="MF_01867"/>
    </source>
</evidence>
<comment type="function">
    <text evidence="1">Involved in bacillithiol (BSH) biosynthesis. May catalyze the last step of the pathway, the addition of cysteine to glucosamine malate (GlcN-Mal) to generate BSH.</text>
</comment>
<comment type="similarity">
    <text evidence="1">Belongs to the BshC family.</text>
</comment>
<sequence>MEIKEISVPQQGVVADYMNGKKEIQSCFDYMLTEDAFKQRVQDLREREFFRQDLVTHLLEYNTKLQAGEATIQNVKALGDENTYVVIAGQQAGLLTGPLYTIHKIISVLQLAKEKEESLGVKVVPVFWIAGEDHDMDEINHTFVTKNKKIKKTIFHDRNPKKASASESELSLEDCRKWIEEIFKTYPETNFTKDVLQFIDDSLRKSNTYVDFFGHLIMKMFVNSGLILVDSHHPELRKLEVPFFKQIVSKYKEVQEGLHNQQRVIKELGYKPIIETKSNAVHIFMEIDNERVLLEDNQGKFVGKDGTYSFSYKELIEEMERSPERFSNNVVTRPLMQEYVFPTLAFIGGPGELAYWSELQQVFHTIGFRMPPVVPRITITYIERDIATDLHDLQLQESDPFFNNVDKLRENWLSNQIEEPIDERFVEAKKEIIDIHKSLQQFVKKIDPGLSAFAGKNEFKINEQIELLERMLKRNVEKKHEVELNKFRRIQFALRPLGAPQERVWNVCYYLNQFGLDFVDRVMEKPFSWNGKHHVIKL</sequence>
<feature type="chain" id="PRO_1000188715" description="Putative cysteine ligase BshC">
    <location>
        <begin position="1"/>
        <end position="538"/>
    </location>
</feature>
<feature type="coiled-coil region" evidence="1">
    <location>
        <begin position="460"/>
        <end position="484"/>
    </location>
</feature>
<proteinExistence type="inferred from homology"/>
<reference key="1">
    <citation type="submission" date="2008-10" db="EMBL/GenBank/DDBJ databases">
        <title>Genome sequence of Bacillus anthracis str. CDC 684.</title>
        <authorList>
            <person name="Dodson R.J."/>
            <person name="Munk A.C."/>
            <person name="Brettin T."/>
            <person name="Bruce D."/>
            <person name="Detter C."/>
            <person name="Tapia R."/>
            <person name="Han C."/>
            <person name="Sutton G."/>
            <person name="Sims D."/>
        </authorList>
    </citation>
    <scope>NUCLEOTIDE SEQUENCE [LARGE SCALE GENOMIC DNA]</scope>
    <source>
        <strain>CDC 684 / NRRL 3495</strain>
    </source>
</reference>